<feature type="chain" id="PRO_0000303021" description="Undecaprenyl-diphosphatase">
    <location>
        <begin position="1"/>
        <end position="268"/>
    </location>
</feature>
<feature type="transmembrane region" description="Helical" evidence="1">
    <location>
        <begin position="47"/>
        <end position="67"/>
    </location>
</feature>
<feature type="transmembrane region" description="Helical" evidence="1">
    <location>
        <begin position="83"/>
        <end position="103"/>
    </location>
</feature>
<feature type="transmembrane region" description="Helical" evidence="1">
    <location>
        <begin position="109"/>
        <end position="129"/>
    </location>
</feature>
<feature type="transmembrane region" description="Helical" evidence="1">
    <location>
        <begin position="144"/>
        <end position="164"/>
    </location>
</feature>
<feature type="transmembrane region" description="Helical" evidence="1">
    <location>
        <begin position="184"/>
        <end position="204"/>
    </location>
</feature>
<feature type="transmembrane region" description="Helical" evidence="1">
    <location>
        <begin position="218"/>
        <end position="238"/>
    </location>
</feature>
<feature type="transmembrane region" description="Helical" evidence="1">
    <location>
        <begin position="246"/>
        <end position="266"/>
    </location>
</feature>
<accession>A4YJM2</accession>
<dbReference type="EC" id="3.6.1.27" evidence="1"/>
<dbReference type="EMBL" id="CU234118">
    <property type="protein sequence ID" value="CAL74098.1"/>
    <property type="molecule type" value="Genomic_DNA"/>
</dbReference>
<dbReference type="RefSeq" id="WP_011923396.1">
    <property type="nucleotide sequence ID" value="NC_009445.1"/>
</dbReference>
<dbReference type="SMR" id="A4YJM2"/>
<dbReference type="STRING" id="114615.BRADO0129"/>
<dbReference type="KEGG" id="bra:BRADO0129"/>
<dbReference type="eggNOG" id="COG1968">
    <property type="taxonomic scope" value="Bacteria"/>
</dbReference>
<dbReference type="HOGENOM" id="CLU_060296_2_0_5"/>
<dbReference type="OrthoDB" id="9808289at2"/>
<dbReference type="Proteomes" id="UP000001994">
    <property type="component" value="Chromosome"/>
</dbReference>
<dbReference type="GO" id="GO:0005886">
    <property type="term" value="C:plasma membrane"/>
    <property type="evidence" value="ECO:0007669"/>
    <property type="project" value="UniProtKB-SubCell"/>
</dbReference>
<dbReference type="GO" id="GO:0050380">
    <property type="term" value="F:undecaprenyl-diphosphatase activity"/>
    <property type="evidence" value="ECO:0007669"/>
    <property type="project" value="UniProtKB-UniRule"/>
</dbReference>
<dbReference type="GO" id="GO:0071555">
    <property type="term" value="P:cell wall organization"/>
    <property type="evidence" value="ECO:0007669"/>
    <property type="project" value="UniProtKB-KW"/>
</dbReference>
<dbReference type="GO" id="GO:0009252">
    <property type="term" value="P:peptidoglycan biosynthetic process"/>
    <property type="evidence" value="ECO:0007669"/>
    <property type="project" value="UniProtKB-KW"/>
</dbReference>
<dbReference type="GO" id="GO:0008360">
    <property type="term" value="P:regulation of cell shape"/>
    <property type="evidence" value="ECO:0007669"/>
    <property type="project" value="UniProtKB-KW"/>
</dbReference>
<dbReference type="GO" id="GO:0046677">
    <property type="term" value="P:response to antibiotic"/>
    <property type="evidence" value="ECO:0007669"/>
    <property type="project" value="UniProtKB-UniRule"/>
</dbReference>
<dbReference type="HAMAP" id="MF_01006">
    <property type="entry name" value="Undec_diphosphatase"/>
    <property type="match status" value="1"/>
</dbReference>
<dbReference type="InterPro" id="IPR003824">
    <property type="entry name" value="UppP"/>
</dbReference>
<dbReference type="NCBIfam" id="NF001389">
    <property type="entry name" value="PRK00281.1-2"/>
    <property type="match status" value="1"/>
</dbReference>
<dbReference type="NCBIfam" id="NF001390">
    <property type="entry name" value="PRK00281.1-4"/>
    <property type="match status" value="1"/>
</dbReference>
<dbReference type="NCBIfam" id="TIGR00753">
    <property type="entry name" value="undec_PP_bacA"/>
    <property type="match status" value="1"/>
</dbReference>
<dbReference type="PANTHER" id="PTHR30622">
    <property type="entry name" value="UNDECAPRENYL-DIPHOSPHATASE"/>
    <property type="match status" value="1"/>
</dbReference>
<dbReference type="PANTHER" id="PTHR30622:SF3">
    <property type="entry name" value="UNDECAPRENYL-DIPHOSPHATASE"/>
    <property type="match status" value="1"/>
</dbReference>
<dbReference type="Pfam" id="PF02673">
    <property type="entry name" value="BacA"/>
    <property type="match status" value="1"/>
</dbReference>
<proteinExistence type="inferred from homology"/>
<keyword id="KW-0046">Antibiotic resistance</keyword>
<keyword id="KW-0997">Cell inner membrane</keyword>
<keyword id="KW-1003">Cell membrane</keyword>
<keyword id="KW-0133">Cell shape</keyword>
<keyword id="KW-0961">Cell wall biogenesis/degradation</keyword>
<keyword id="KW-0378">Hydrolase</keyword>
<keyword id="KW-0472">Membrane</keyword>
<keyword id="KW-0573">Peptidoglycan synthesis</keyword>
<keyword id="KW-1185">Reference proteome</keyword>
<keyword id="KW-0812">Transmembrane</keyword>
<keyword id="KW-1133">Transmembrane helix</keyword>
<organism>
    <name type="scientific">Bradyrhizobium sp. (strain ORS 278)</name>
    <dbReference type="NCBI Taxonomy" id="114615"/>
    <lineage>
        <taxon>Bacteria</taxon>
        <taxon>Pseudomonadati</taxon>
        <taxon>Pseudomonadota</taxon>
        <taxon>Alphaproteobacteria</taxon>
        <taxon>Hyphomicrobiales</taxon>
        <taxon>Nitrobacteraceae</taxon>
        <taxon>Bradyrhizobium</taxon>
    </lineage>
</organism>
<comment type="function">
    <text evidence="1">Catalyzes the dephosphorylation of undecaprenyl diphosphate (UPP). Confers resistance to bacitracin.</text>
</comment>
<comment type="catalytic activity">
    <reaction evidence="1">
        <text>di-trans,octa-cis-undecaprenyl diphosphate + H2O = di-trans,octa-cis-undecaprenyl phosphate + phosphate + H(+)</text>
        <dbReference type="Rhea" id="RHEA:28094"/>
        <dbReference type="ChEBI" id="CHEBI:15377"/>
        <dbReference type="ChEBI" id="CHEBI:15378"/>
        <dbReference type="ChEBI" id="CHEBI:43474"/>
        <dbReference type="ChEBI" id="CHEBI:58405"/>
        <dbReference type="ChEBI" id="CHEBI:60392"/>
        <dbReference type="EC" id="3.6.1.27"/>
    </reaction>
</comment>
<comment type="subcellular location">
    <subcellularLocation>
        <location evidence="1">Cell inner membrane</location>
        <topology evidence="1">Multi-pass membrane protein</topology>
    </subcellularLocation>
</comment>
<comment type="miscellaneous">
    <text>Bacitracin is thought to be involved in the inhibition of peptidoglycan synthesis by sequestering undecaprenyl diphosphate, thereby reducing the pool of lipid carrier available.</text>
</comment>
<comment type="similarity">
    <text evidence="1">Belongs to the UppP family.</text>
</comment>
<gene>
    <name evidence="1" type="primary">uppP</name>
    <name type="ordered locus">BRADO0129</name>
</gene>
<reference key="1">
    <citation type="journal article" date="2007" name="Science">
        <title>Legumes symbioses: absence of nod genes in photosynthetic bradyrhizobia.</title>
        <authorList>
            <person name="Giraud E."/>
            <person name="Moulin L."/>
            <person name="Vallenet D."/>
            <person name="Barbe V."/>
            <person name="Cytryn E."/>
            <person name="Avarre J.-C."/>
            <person name="Jaubert M."/>
            <person name="Simon D."/>
            <person name="Cartieaux F."/>
            <person name="Prin Y."/>
            <person name="Bena G."/>
            <person name="Hannibal L."/>
            <person name="Fardoux J."/>
            <person name="Kojadinovic M."/>
            <person name="Vuillet L."/>
            <person name="Lajus A."/>
            <person name="Cruveiller S."/>
            <person name="Rouy Z."/>
            <person name="Mangenot S."/>
            <person name="Segurens B."/>
            <person name="Dossat C."/>
            <person name="Franck W.L."/>
            <person name="Chang W.-S."/>
            <person name="Saunders E."/>
            <person name="Bruce D."/>
            <person name="Richardson P."/>
            <person name="Normand P."/>
            <person name="Dreyfus B."/>
            <person name="Pignol D."/>
            <person name="Stacey G."/>
            <person name="Emerich D."/>
            <person name="Vermeglio A."/>
            <person name="Medigue C."/>
            <person name="Sadowsky M."/>
        </authorList>
    </citation>
    <scope>NUCLEOTIDE SEQUENCE [LARGE SCALE GENOMIC DNA]</scope>
    <source>
        <strain>ORS 278</strain>
    </source>
</reference>
<name>UPPP_BRASO</name>
<protein>
    <recommendedName>
        <fullName evidence="1">Undecaprenyl-diphosphatase</fullName>
        <ecNumber evidence="1">3.6.1.27</ecNumber>
    </recommendedName>
    <alternativeName>
        <fullName evidence="1">Bacitracin resistance protein</fullName>
    </alternativeName>
    <alternativeName>
        <fullName evidence="1">Undecaprenyl pyrophosphate phosphatase</fullName>
    </alternativeName>
</protein>
<evidence type="ECO:0000255" key="1">
    <source>
        <dbReference type="HAMAP-Rule" id="MF_01006"/>
    </source>
</evidence>
<sequence length="268" mass="29260">MMSDTLRAVLLGIVEGVTEFLPVSSTGHLLLAERFFGLGEDGFWKSFAILIQLGAILAIVALYFFKLSRVAIGALTNPDDRRFIIGVLIAFLPAVIIGLIAGKYIKALLFDPWVVCFSLIVGGAILLWVDQIDLKPREHDATRYPLMMYLWIGVAQCLAMIPGVSRSGSTIVAAMLLGGDKRSAAEFSFFLAIPTMVGAFVYDFYKSRAEMTSDHLGLIAIGFVVSFITAMIVVKAFLGYVTRHGFVLFAWWRVIVGTLGLIALALGK</sequence>